<gene>
    <name type="primary">sll</name>
    <name type="synonym">PAPST1</name>
    <name type="ORF">CG7623</name>
</gene>
<reference key="1">
    <citation type="journal article" date="2003" name="J. Biol. Chem.">
        <title>Molecular cloning and identification of 3'-phosphoadenosine 5'-phosphosulfate transporter.</title>
        <authorList>
            <person name="Kamiyama S."/>
            <person name="Suda T."/>
            <person name="Ueda R."/>
            <person name="Suzuki M."/>
            <person name="Okubo R."/>
            <person name="Kikuchi N."/>
            <person name="Chiba Y."/>
            <person name="Goto S."/>
            <person name="Toyoda H."/>
            <person name="Saigo K."/>
            <person name="Watanabe M."/>
            <person name="Narimatsu H."/>
            <person name="Jigami Y."/>
            <person name="Nishihara S."/>
        </authorList>
    </citation>
    <scope>NUCLEOTIDE SEQUENCE [MRNA]</scope>
    <scope>FUNCTION</scope>
    <scope>BIOPHYSICOCHEMICAL PROPERTIES</scope>
    <scope>SUBCELLULAR LOCATION</scope>
</reference>
<reference key="2">
    <citation type="journal article" date="2000" name="Science">
        <title>The genome sequence of Drosophila melanogaster.</title>
        <authorList>
            <person name="Adams M.D."/>
            <person name="Celniker S.E."/>
            <person name="Holt R.A."/>
            <person name="Evans C.A."/>
            <person name="Gocayne J.D."/>
            <person name="Amanatides P.G."/>
            <person name="Scherer S.E."/>
            <person name="Li P.W."/>
            <person name="Hoskins R.A."/>
            <person name="Galle R.F."/>
            <person name="George R.A."/>
            <person name="Lewis S.E."/>
            <person name="Richards S."/>
            <person name="Ashburner M."/>
            <person name="Henderson S.N."/>
            <person name="Sutton G.G."/>
            <person name="Wortman J.R."/>
            <person name="Yandell M.D."/>
            <person name="Zhang Q."/>
            <person name="Chen L.X."/>
            <person name="Brandon R.C."/>
            <person name="Rogers Y.-H.C."/>
            <person name="Blazej R.G."/>
            <person name="Champe M."/>
            <person name="Pfeiffer B.D."/>
            <person name="Wan K.H."/>
            <person name="Doyle C."/>
            <person name="Baxter E.G."/>
            <person name="Helt G."/>
            <person name="Nelson C.R."/>
            <person name="Miklos G.L.G."/>
            <person name="Abril J.F."/>
            <person name="Agbayani A."/>
            <person name="An H.-J."/>
            <person name="Andrews-Pfannkoch C."/>
            <person name="Baldwin D."/>
            <person name="Ballew R.M."/>
            <person name="Basu A."/>
            <person name="Baxendale J."/>
            <person name="Bayraktaroglu L."/>
            <person name="Beasley E.M."/>
            <person name="Beeson K.Y."/>
            <person name="Benos P.V."/>
            <person name="Berman B.P."/>
            <person name="Bhandari D."/>
            <person name="Bolshakov S."/>
            <person name="Borkova D."/>
            <person name="Botchan M.R."/>
            <person name="Bouck J."/>
            <person name="Brokstein P."/>
            <person name="Brottier P."/>
            <person name="Burtis K.C."/>
            <person name="Busam D.A."/>
            <person name="Butler H."/>
            <person name="Cadieu E."/>
            <person name="Center A."/>
            <person name="Chandra I."/>
            <person name="Cherry J.M."/>
            <person name="Cawley S."/>
            <person name="Dahlke C."/>
            <person name="Davenport L.B."/>
            <person name="Davies P."/>
            <person name="de Pablos B."/>
            <person name="Delcher A."/>
            <person name="Deng Z."/>
            <person name="Mays A.D."/>
            <person name="Dew I."/>
            <person name="Dietz S.M."/>
            <person name="Dodson K."/>
            <person name="Doup L.E."/>
            <person name="Downes M."/>
            <person name="Dugan-Rocha S."/>
            <person name="Dunkov B.C."/>
            <person name="Dunn P."/>
            <person name="Durbin K.J."/>
            <person name="Evangelista C.C."/>
            <person name="Ferraz C."/>
            <person name="Ferriera S."/>
            <person name="Fleischmann W."/>
            <person name="Fosler C."/>
            <person name="Gabrielian A.E."/>
            <person name="Garg N.S."/>
            <person name="Gelbart W.M."/>
            <person name="Glasser K."/>
            <person name="Glodek A."/>
            <person name="Gong F."/>
            <person name="Gorrell J.H."/>
            <person name="Gu Z."/>
            <person name="Guan P."/>
            <person name="Harris M."/>
            <person name="Harris N.L."/>
            <person name="Harvey D.A."/>
            <person name="Heiman T.J."/>
            <person name="Hernandez J.R."/>
            <person name="Houck J."/>
            <person name="Hostin D."/>
            <person name="Houston K.A."/>
            <person name="Howland T.J."/>
            <person name="Wei M.-H."/>
            <person name="Ibegwam C."/>
            <person name="Jalali M."/>
            <person name="Kalush F."/>
            <person name="Karpen G.H."/>
            <person name="Ke Z."/>
            <person name="Kennison J.A."/>
            <person name="Ketchum K.A."/>
            <person name="Kimmel B.E."/>
            <person name="Kodira C.D."/>
            <person name="Kraft C.L."/>
            <person name="Kravitz S."/>
            <person name="Kulp D."/>
            <person name="Lai Z."/>
            <person name="Lasko P."/>
            <person name="Lei Y."/>
            <person name="Levitsky A.A."/>
            <person name="Li J.H."/>
            <person name="Li Z."/>
            <person name="Liang Y."/>
            <person name="Lin X."/>
            <person name="Liu X."/>
            <person name="Mattei B."/>
            <person name="McIntosh T.C."/>
            <person name="McLeod M.P."/>
            <person name="McPherson D."/>
            <person name="Merkulov G."/>
            <person name="Milshina N.V."/>
            <person name="Mobarry C."/>
            <person name="Morris J."/>
            <person name="Moshrefi A."/>
            <person name="Mount S.M."/>
            <person name="Moy M."/>
            <person name="Murphy B."/>
            <person name="Murphy L."/>
            <person name="Muzny D.M."/>
            <person name="Nelson D.L."/>
            <person name="Nelson D.R."/>
            <person name="Nelson K.A."/>
            <person name="Nixon K."/>
            <person name="Nusskern D.R."/>
            <person name="Pacleb J.M."/>
            <person name="Palazzolo M."/>
            <person name="Pittman G.S."/>
            <person name="Pan S."/>
            <person name="Pollard J."/>
            <person name="Puri V."/>
            <person name="Reese M.G."/>
            <person name="Reinert K."/>
            <person name="Remington K."/>
            <person name="Saunders R.D.C."/>
            <person name="Scheeler F."/>
            <person name="Shen H."/>
            <person name="Shue B.C."/>
            <person name="Siden-Kiamos I."/>
            <person name="Simpson M."/>
            <person name="Skupski M.P."/>
            <person name="Smith T.J."/>
            <person name="Spier E."/>
            <person name="Spradling A.C."/>
            <person name="Stapleton M."/>
            <person name="Strong R."/>
            <person name="Sun E."/>
            <person name="Svirskas R."/>
            <person name="Tector C."/>
            <person name="Turner R."/>
            <person name="Venter E."/>
            <person name="Wang A.H."/>
            <person name="Wang X."/>
            <person name="Wang Z.-Y."/>
            <person name="Wassarman D.A."/>
            <person name="Weinstock G.M."/>
            <person name="Weissenbach J."/>
            <person name="Williams S.M."/>
            <person name="Woodage T."/>
            <person name="Worley K.C."/>
            <person name="Wu D."/>
            <person name="Yang S."/>
            <person name="Yao Q.A."/>
            <person name="Ye J."/>
            <person name="Yeh R.-F."/>
            <person name="Zaveri J.S."/>
            <person name="Zhan M."/>
            <person name="Zhang G."/>
            <person name="Zhao Q."/>
            <person name="Zheng L."/>
            <person name="Zheng X.H."/>
            <person name="Zhong F.N."/>
            <person name="Zhong W."/>
            <person name="Zhou X."/>
            <person name="Zhu S.C."/>
            <person name="Zhu X."/>
            <person name="Smith H.O."/>
            <person name="Gibbs R.A."/>
            <person name="Myers E.W."/>
            <person name="Rubin G.M."/>
            <person name="Venter J.C."/>
        </authorList>
    </citation>
    <scope>NUCLEOTIDE SEQUENCE [LARGE SCALE GENOMIC DNA]</scope>
    <source>
        <strain>Berkeley</strain>
    </source>
</reference>
<reference key="3">
    <citation type="journal article" date="2002" name="Genome Biol.">
        <title>Annotation of the Drosophila melanogaster euchromatic genome: a systematic review.</title>
        <authorList>
            <person name="Misra S."/>
            <person name="Crosby M.A."/>
            <person name="Mungall C.J."/>
            <person name="Matthews B.B."/>
            <person name="Campbell K.S."/>
            <person name="Hradecky P."/>
            <person name="Huang Y."/>
            <person name="Kaminker J.S."/>
            <person name="Millburn G.H."/>
            <person name="Prochnik S.E."/>
            <person name="Smith C.D."/>
            <person name="Tupy J.L."/>
            <person name="Whitfield E.J."/>
            <person name="Bayraktaroglu L."/>
            <person name="Berman B.P."/>
            <person name="Bettencourt B.R."/>
            <person name="Celniker S.E."/>
            <person name="de Grey A.D.N.J."/>
            <person name="Drysdale R.A."/>
            <person name="Harris N.L."/>
            <person name="Richter J."/>
            <person name="Russo S."/>
            <person name="Schroeder A.J."/>
            <person name="Shu S.Q."/>
            <person name="Stapleton M."/>
            <person name="Yamada C."/>
            <person name="Ashburner M."/>
            <person name="Gelbart W.M."/>
            <person name="Rubin G.M."/>
            <person name="Lewis S.E."/>
        </authorList>
    </citation>
    <scope>GENOME REANNOTATION</scope>
    <source>
        <strain>Berkeley</strain>
    </source>
</reference>
<reference key="4">
    <citation type="journal article" date="2002" name="Genome Biol.">
        <title>A Drosophila full-length cDNA resource.</title>
        <authorList>
            <person name="Stapleton M."/>
            <person name="Carlson J.W."/>
            <person name="Brokstein P."/>
            <person name="Yu C."/>
            <person name="Champe M."/>
            <person name="George R.A."/>
            <person name="Guarin H."/>
            <person name="Kronmiller B."/>
            <person name="Pacleb J.M."/>
            <person name="Park S."/>
            <person name="Wan K.H."/>
            <person name="Rubin G.M."/>
            <person name="Celniker S.E."/>
        </authorList>
    </citation>
    <scope>NUCLEOTIDE SEQUENCE [LARGE SCALE MRNA]</scope>
    <source>
        <strain>Berkeley</strain>
        <tissue>Embryo</tissue>
    </source>
</reference>
<reference key="5">
    <citation type="journal article" date="2003" name="EMBO J.">
        <title>Slalom encodes an adenosine 3'-phosphate 5'-phosphosulfate transporter essential for development in Drosophila.</title>
        <authorList>
            <person name="Lueders F."/>
            <person name="Segawa H."/>
            <person name="Stein D."/>
            <person name="Selva E.M."/>
            <person name="Perrimon N."/>
            <person name="Turco S.J."/>
            <person name="Haecker U."/>
        </authorList>
    </citation>
    <scope>FUNCTION</scope>
    <scope>SUBCELLULAR LOCATION</scope>
    <scope>TISSUE SPECIFICITY</scope>
    <scope>DEVELOPMENTAL STAGE</scope>
    <scope>DISRUPTION PHENOTYPE</scope>
</reference>
<proteinExistence type="evidence at protein level"/>
<evidence type="ECO:0000250" key="1"/>
<evidence type="ECO:0000255" key="2"/>
<evidence type="ECO:0000269" key="3">
    <source>
    </source>
</evidence>
<evidence type="ECO:0000269" key="4">
    <source>
    </source>
</evidence>
<evidence type="ECO:0000305" key="5"/>
<accession>Q9VEI3</accession>
<accession>Q960E7</accession>
<protein>
    <recommendedName>
        <fullName>Adenosine 3'-phospho 5'-phosphosulfate transporter 1</fullName>
    </recommendedName>
    <alternativeName>
        <fullName>PAPS transporter 1</fullName>
    </alternativeName>
    <alternativeName>
        <fullName>Protein slalom</fullName>
    </alternativeName>
</protein>
<keyword id="KW-0217">Developmental protein</keyword>
<keyword id="KW-0333">Golgi apparatus</keyword>
<keyword id="KW-0472">Membrane</keyword>
<keyword id="KW-1185">Reference proteome</keyword>
<keyword id="KW-0812">Transmembrane</keyword>
<keyword id="KW-1133">Transmembrane helix</keyword>
<keyword id="KW-0813">Transport</keyword>
<dbReference type="EMBL" id="AB107958">
    <property type="protein sequence ID" value="BAC79118.1"/>
    <property type="molecule type" value="mRNA"/>
</dbReference>
<dbReference type="EMBL" id="AE014297">
    <property type="protein sequence ID" value="AAF55438.1"/>
    <property type="molecule type" value="Genomic_DNA"/>
</dbReference>
<dbReference type="EMBL" id="AY052098">
    <property type="protein sequence ID" value="AAK93522.1"/>
    <property type="molecule type" value="mRNA"/>
</dbReference>
<dbReference type="RefSeq" id="NP_001247153.1">
    <property type="nucleotide sequence ID" value="NM_001260224.2"/>
</dbReference>
<dbReference type="RefSeq" id="NP_524389.1">
    <property type="nucleotide sequence ID" value="NM_079665.4"/>
</dbReference>
<dbReference type="BioGRID" id="67147">
    <property type="interactions" value="11"/>
</dbReference>
<dbReference type="FunCoup" id="Q9VEI3">
    <property type="interactions" value="1130"/>
</dbReference>
<dbReference type="IntAct" id="Q9VEI3">
    <property type="interactions" value="7"/>
</dbReference>
<dbReference type="STRING" id="7227.FBpp0293851"/>
<dbReference type="TCDB" id="2.A.7.11.2">
    <property type="family name" value="the drug/metabolite transporter (dmt) superfamily"/>
</dbReference>
<dbReference type="PaxDb" id="7227-FBpp0082903"/>
<dbReference type="DNASU" id="42115"/>
<dbReference type="EnsemblMetazoa" id="FBtr0083462">
    <property type="protein sequence ID" value="FBpp0082903"/>
    <property type="gene ID" value="FBgn0038524"/>
</dbReference>
<dbReference type="EnsemblMetazoa" id="FBtr0305308">
    <property type="protein sequence ID" value="FBpp0293851"/>
    <property type="gene ID" value="FBgn0038524"/>
</dbReference>
<dbReference type="GeneID" id="42115"/>
<dbReference type="KEGG" id="dme:Dmel_CG7623"/>
<dbReference type="UCSC" id="CG7623-RA">
    <property type="organism name" value="d. melanogaster"/>
</dbReference>
<dbReference type="AGR" id="FB:FBgn0038524"/>
<dbReference type="CTD" id="42115"/>
<dbReference type="FlyBase" id="FBgn0038524">
    <property type="gene designation" value="sll"/>
</dbReference>
<dbReference type="VEuPathDB" id="VectorBase:FBgn0038524"/>
<dbReference type="eggNOG" id="KOG1581">
    <property type="taxonomic scope" value="Eukaryota"/>
</dbReference>
<dbReference type="GeneTree" id="ENSGT00940000157927"/>
<dbReference type="HOGENOM" id="CLU_036019_3_1_1"/>
<dbReference type="InParanoid" id="Q9VEI3"/>
<dbReference type="OMA" id="KIMTQHY"/>
<dbReference type="OrthoDB" id="10035043at2759"/>
<dbReference type="PhylomeDB" id="Q9VEI3"/>
<dbReference type="Reactome" id="R-DME-174362">
    <property type="pathway name" value="Transport and synthesis of PAPS"/>
</dbReference>
<dbReference type="Reactome" id="R-DME-727802">
    <property type="pathway name" value="Transport of nucleotide sugars"/>
</dbReference>
<dbReference type="SABIO-RK" id="Q9VEI3"/>
<dbReference type="BioGRID-ORCS" id="42115">
    <property type="hits" value="0 hits in 3 CRISPR screens"/>
</dbReference>
<dbReference type="GenomeRNAi" id="42115"/>
<dbReference type="PRO" id="PR:Q9VEI3"/>
<dbReference type="Proteomes" id="UP000000803">
    <property type="component" value="Chromosome 3R"/>
</dbReference>
<dbReference type="Bgee" id="FBgn0038524">
    <property type="expression patterns" value="Expressed in nurse follicle cell (Drosophila) in ovary and 54 other cell types or tissues"/>
</dbReference>
<dbReference type="ExpressionAtlas" id="Q9VEI3">
    <property type="expression patterns" value="baseline and differential"/>
</dbReference>
<dbReference type="GO" id="GO:0005789">
    <property type="term" value="C:endoplasmic reticulum membrane"/>
    <property type="evidence" value="ECO:0000318"/>
    <property type="project" value="GO_Central"/>
</dbReference>
<dbReference type="GO" id="GO:0005794">
    <property type="term" value="C:Golgi apparatus"/>
    <property type="evidence" value="ECO:0000314"/>
    <property type="project" value="UniProtKB"/>
</dbReference>
<dbReference type="GO" id="GO:0000139">
    <property type="term" value="C:Golgi membrane"/>
    <property type="evidence" value="ECO:0000318"/>
    <property type="project" value="GO_Central"/>
</dbReference>
<dbReference type="GO" id="GO:0016020">
    <property type="term" value="C:membrane"/>
    <property type="evidence" value="ECO:0000303"/>
    <property type="project" value="UniProtKB"/>
</dbReference>
<dbReference type="GO" id="GO:0046964">
    <property type="term" value="F:3'-phosphoadenosine 5'-phosphosulfate transmembrane transporter activity"/>
    <property type="evidence" value="ECO:0000314"/>
    <property type="project" value="UniProtKB"/>
</dbReference>
<dbReference type="GO" id="GO:0046963">
    <property type="term" value="P:3'-phosphoadenosine 5'-phosphosulfate transport"/>
    <property type="evidence" value="ECO:0000314"/>
    <property type="project" value="UniProtKB"/>
</dbReference>
<dbReference type="GO" id="GO:0015012">
    <property type="term" value="P:heparan sulfate proteoglycan biosynthetic process"/>
    <property type="evidence" value="ECO:0000315"/>
    <property type="project" value="FlyBase"/>
</dbReference>
<dbReference type="GO" id="GO:0007310">
    <property type="term" value="P:oocyte dorsal/ventral axis specification"/>
    <property type="evidence" value="ECO:0000315"/>
    <property type="project" value="FlyBase"/>
</dbReference>
<dbReference type="GO" id="GO:0055085">
    <property type="term" value="P:transmembrane transport"/>
    <property type="evidence" value="ECO:0000318"/>
    <property type="project" value="GO_Central"/>
</dbReference>
<dbReference type="InterPro" id="IPR013657">
    <property type="entry name" value="SCL35B1-4/HUT1"/>
</dbReference>
<dbReference type="PANTHER" id="PTHR10778:SF13">
    <property type="entry name" value="ADENOSINE 3'-PHOSPHO 5'-PHOSPHOSULFATE TRANSPORTER 1"/>
    <property type="match status" value="1"/>
</dbReference>
<dbReference type="PANTHER" id="PTHR10778">
    <property type="entry name" value="SOLUTE CARRIER FAMILY 35 MEMBER B"/>
    <property type="match status" value="1"/>
</dbReference>
<dbReference type="Pfam" id="PF08449">
    <property type="entry name" value="UAA"/>
    <property type="match status" value="1"/>
</dbReference>
<feature type="chain" id="PRO_0000213378" description="Adenosine 3'-phospho 5'-phosphosulfate transporter 1">
    <location>
        <begin position="1"/>
        <end position="465"/>
    </location>
</feature>
<feature type="transmembrane region" description="Helical" evidence="2">
    <location>
        <begin position="13"/>
        <end position="33"/>
    </location>
</feature>
<feature type="transmembrane region" description="Helical" evidence="2">
    <location>
        <begin position="61"/>
        <end position="81"/>
    </location>
</feature>
<feature type="transmembrane region" description="Helical" evidence="2">
    <location>
        <begin position="142"/>
        <end position="162"/>
    </location>
</feature>
<feature type="transmembrane region" description="Helical" evidence="2">
    <location>
        <begin position="185"/>
        <end position="205"/>
    </location>
</feature>
<feature type="transmembrane region" description="Helical" evidence="2">
    <location>
        <begin position="270"/>
        <end position="290"/>
    </location>
</feature>
<feature type="transmembrane region" description="Helical" evidence="2">
    <location>
        <begin position="299"/>
        <end position="319"/>
    </location>
</feature>
<feature type="transmembrane region" description="Helical" evidence="2">
    <location>
        <begin position="339"/>
        <end position="359"/>
    </location>
</feature>
<feature type="transmembrane region" description="Helical" evidence="2">
    <location>
        <begin position="370"/>
        <end position="390"/>
    </location>
</feature>
<feature type="transmembrane region" description="Helical" evidence="2">
    <location>
        <begin position="391"/>
        <end position="407"/>
    </location>
</feature>
<feature type="transmembrane region" description="Helical" evidence="2">
    <location>
        <begin position="424"/>
        <end position="444"/>
    </location>
</feature>
<feature type="sequence conflict" description="In Ref. 4; AAK93522." evidence="5" ref="4">
    <original>T</original>
    <variation>S</variation>
    <location>
        <position position="22"/>
    </location>
</feature>
<name>S35B2_DROME</name>
<organism>
    <name type="scientific">Drosophila melanogaster</name>
    <name type="common">Fruit fly</name>
    <dbReference type="NCBI Taxonomy" id="7227"/>
    <lineage>
        <taxon>Eukaryota</taxon>
        <taxon>Metazoa</taxon>
        <taxon>Ecdysozoa</taxon>
        <taxon>Arthropoda</taxon>
        <taxon>Hexapoda</taxon>
        <taxon>Insecta</taxon>
        <taxon>Pterygota</taxon>
        <taxon>Neoptera</taxon>
        <taxon>Endopterygota</taxon>
        <taxon>Diptera</taxon>
        <taxon>Brachycera</taxon>
        <taxon>Muscomorpha</taxon>
        <taxon>Ephydroidea</taxon>
        <taxon>Drosophilidae</taxon>
        <taxon>Drosophila</taxon>
        <taxon>Sophophora</taxon>
    </lineage>
</organism>
<sequence>MYAYNKMGRVPELVICSFIVVTLLVIHFFSDLLRASLGGYYNQDVTLSQLVESQNSDYAWFLKLLVNCFGYSCVFVPGFLIYKYVGRINYLERGNKTFLHKAINMCITGNSGYDQLDAGTSTADKDRPAASTAPKRTSSQEAVQLLWCFGGLMISYLTWGVLQEKIMTQNYLNFTGESAKFKDSQFLVFSNRLLAFLVALAYLQWQPSPVRHRAPLYKYSYASFSNIMSAWFQYEALKFVNFPTQVLAKSCKIIPVMLMGKIMSKAKYESYEYVTALLISLGMIFFMSGSSDSSKASGVTTLTGIFLLSMYMVFDSFTANWQGSLFKSYGMTPLQMMCGVNLFSSIFTGASLSMQGGFMDSLAFATEHPKFVFDMVVLSVCSAVGQLFIYHTIDVFGPVVFTIIMTLRQAVAIMLSCFIYQHSISLLGIFGVLIVFVAIFLRVYCTQRLRAIRKRAEANKPKMAV</sequence>
<comment type="function">
    <text evidence="3 4">Mediates the transport of adenosine 3'-phospho 5'-phosphosulfate (PAPS), from cytosol into Golgi. PAPS is a universal sulfuryl donor for sulfation events that take place in the Golgi. Required for the dorsoventral patterning, suggesting that it mediates the transport of the sulfate donor required for the sulfotransferase activity of pip (pipe).</text>
</comment>
<comment type="biophysicochemical properties">
    <kinetics>
        <KM evidence="3">1.2 uM for PAPS</KM>
    </kinetics>
</comment>
<comment type="subcellular location">
    <subcellularLocation>
        <location evidence="1">Golgi apparatus membrane</location>
        <topology evidence="1">Multi-pass membrane protein</topology>
    </subcellularLocation>
</comment>
<comment type="tissue specificity">
    <text evidence="4">Expressed throughout embryogenesis. During oogenesis, it is expressed strongly in the nurse cells of the germline. Maternally expressed at the syncytial blastoderm stage. Zygotically expressed, from after germ-band elongation in the invaginating salivary gland placodes. Remains expressed predominantly in this tissue throughout embryogenesis, but low-level expression may also be present throughout the embryo.</text>
</comment>
<comment type="developmental stage">
    <text evidence="4">Expressed both maternally and zygotically.</text>
</comment>
<comment type="disruption phenotype">
    <text evidence="4">Flies display defects in wingless (wg) and hedgehog (hh) signaling, probably due to the lack of sulfation of glycosaminoglycans by sulfotransferases such as sfl.</text>
</comment>
<comment type="similarity">
    <text evidence="5">Belongs to the nucleotide-sugar transporter family. SLC35B subfamily.</text>
</comment>